<comment type="subcellular location">
    <subcellularLocation>
        <location evidence="2">Cell membrane</location>
        <topology evidence="2">Multi-pass membrane protein</topology>
    </subcellularLocation>
</comment>
<comment type="similarity">
    <text evidence="2">Belongs to the VirD4/TraG family.</text>
</comment>
<keyword id="KW-1003">Cell membrane</keyword>
<keyword id="KW-0184">Conjugation</keyword>
<keyword id="KW-0472">Membrane</keyword>
<keyword id="KW-0614">Plasmid</keyword>
<keyword id="KW-1185">Reference proteome</keyword>
<keyword id="KW-0812">Transmembrane</keyword>
<keyword id="KW-1133">Transmembrane helix</keyword>
<sequence length="640" mass="69180">MTVNRIALVVAPVVLMVLTVIGMSGIEQCLSTFGKTDAARLALGRIGIAFPYVTAAAIAVIFLFASAGSAIIKLAGWGALAGSAATMLIATMREASRLAAFAAQVPAGKSIASYLDHATLIGATAALMSGCFSLRVALIGNAAFARAEPRRIRGKRALHGEADWMNMQDAARLFSDAGGVVIGERYRVDKDSTAARSFRADDPETWGAGGKSPLLCFDGSFGSSHGIVFAGSGGFKTTSVTIPTALKWGGALVVLDPSNEVAPMVYEHRKAAARFIRILDPKEPETGFNALDWIGRFGGTKEEDIASVASWIMSDSGGMRGVRDDFFRASALQLLTALIADVCLSGHTDKENQTLRQVRANLAEPEPKLRERLQSIYDNSNSDFVKENVAAYVNMTPETFSGVYANAVKETHWLSYPNYAALVSGSTFSTDALAAGETDVFINIDLKTLETHAGLARVIIGSFLNAIYNRDGEVKGRALFFLDEVARLGYMRILETARDAGRKYGIMLTMIYQSIGQMRETYGGRDAASKWFESASWISFAAINDPETADYISRRCGMTTVEIDQVSRSFQTKGSSRTRSKQLAARPLIQPHEVLRMRADEQIVFTAGNAPLRCGRAIWFRREDMKACGGEPVSQGRKDV</sequence>
<protein>
    <recommendedName>
        <fullName>Probable conjugal transfer protein TraG</fullName>
    </recommendedName>
</protein>
<gene>
    <name type="primary">traG</name>
    <name type="ordered locus">NGR_a03950</name>
    <name type="ORF">y4dV</name>
</gene>
<reference key="1">
    <citation type="journal article" date="1997" name="Nature">
        <title>Molecular basis of symbiosis between Rhizobium and legumes.</title>
        <authorList>
            <person name="Freiberg C.A."/>
            <person name="Fellay R."/>
            <person name="Bairoch A."/>
            <person name="Broughton W.J."/>
            <person name="Rosenthal A."/>
            <person name="Perret X."/>
        </authorList>
    </citation>
    <scope>NUCLEOTIDE SEQUENCE [LARGE SCALE GENOMIC DNA]</scope>
    <source>
        <strain>NBRC 101917 / NGR234</strain>
    </source>
</reference>
<reference key="2">
    <citation type="journal article" date="2009" name="Appl. Environ. Microbiol.">
        <title>Rhizobium sp. strain NGR234 possesses a remarkable number of secretion systems.</title>
        <authorList>
            <person name="Schmeisser C."/>
            <person name="Liesegang H."/>
            <person name="Krysciak D."/>
            <person name="Bakkou N."/>
            <person name="Le Quere A."/>
            <person name="Wollherr A."/>
            <person name="Heinemeyer I."/>
            <person name="Morgenstern B."/>
            <person name="Pommerening-Roeser A."/>
            <person name="Flores M."/>
            <person name="Palacios R."/>
            <person name="Brenner S."/>
            <person name="Gottschalk G."/>
            <person name="Schmitz R.A."/>
            <person name="Broughton W.J."/>
            <person name="Perret X."/>
            <person name="Strittmatter A.W."/>
            <person name="Streit W.R."/>
        </authorList>
    </citation>
    <scope>NUCLEOTIDE SEQUENCE [LARGE SCALE GENOMIC DNA]</scope>
    <source>
        <strain>NBRC 101917 / NGR234</strain>
    </source>
</reference>
<feature type="chain" id="PRO_0000221656" description="Probable conjugal transfer protein TraG">
    <location>
        <begin position="1"/>
        <end position="640"/>
    </location>
</feature>
<feature type="transmembrane region" description="Helical" evidence="1">
    <location>
        <begin position="6"/>
        <end position="26"/>
    </location>
</feature>
<feature type="transmembrane region" description="Helical" evidence="1">
    <location>
        <begin position="46"/>
        <end position="66"/>
    </location>
</feature>
<feature type="transmembrane region" description="Helical" evidence="1">
    <location>
        <begin position="70"/>
        <end position="90"/>
    </location>
</feature>
<feature type="transmembrane region" description="Helical" evidence="1">
    <location>
        <begin position="120"/>
        <end position="140"/>
    </location>
</feature>
<feature type="transmembrane region" description="Helical" evidence="1">
    <location>
        <begin position="215"/>
        <end position="235"/>
    </location>
</feature>
<organism>
    <name type="scientific">Sinorhizobium fredii (strain NBRC 101917 / NGR234)</name>
    <dbReference type="NCBI Taxonomy" id="394"/>
    <lineage>
        <taxon>Bacteria</taxon>
        <taxon>Pseudomonadati</taxon>
        <taxon>Pseudomonadota</taxon>
        <taxon>Alphaproteobacteria</taxon>
        <taxon>Hyphomicrobiales</taxon>
        <taxon>Rhizobiaceae</taxon>
        <taxon>Sinorhizobium/Ensifer group</taxon>
        <taxon>Sinorhizobium</taxon>
    </lineage>
</organism>
<evidence type="ECO:0000255" key="1"/>
<evidence type="ECO:0000305" key="2"/>
<geneLocation type="plasmid">
    <name>sym pNGR234a</name>
</geneLocation>
<name>TRAG_SINFN</name>
<accession>P55421</accession>
<dbReference type="EMBL" id="U00090">
    <property type="protein sequence ID" value="AAB92442.1"/>
    <property type="molecule type" value="Genomic_DNA"/>
</dbReference>
<dbReference type="RefSeq" id="NP_443831.1">
    <property type="nucleotide sequence ID" value="NC_000914.2"/>
</dbReference>
<dbReference type="RefSeq" id="WP_010875407.1">
    <property type="nucleotide sequence ID" value="NC_000914.2"/>
</dbReference>
<dbReference type="SMR" id="P55421"/>
<dbReference type="KEGG" id="rhi:NGR_a03950"/>
<dbReference type="PATRIC" id="fig|394.7.peg.416"/>
<dbReference type="eggNOG" id="COG3505">
    <property type="taxonomic scope" value="Bacteria"/>
</dbReference>
<dbReference type="HOGENOM" id="CLU_028732_0_0_5"/>
<dbReference type="OrthoDB" id="9759295at2"/>
<dbReference type="Proteomes" id="UP000001054">
    <property type="component" value="Plasmid pNGR234a"/>
</dbReference>
<dbReference type="GO" id="GO:0005886">
    <property type="term" value="C:plasma membrane"/>
    <property type="evidence" value="ECO:0007669"/>
    <property type="project" value="UniProtKB-SubCell"/>
</dbReference>
<dbReference type="CDD" id="cd01127">
    <property type="entry name" value="TrwB_TraG_TraD_VirD4"/>
    <property type="match status" value="1"/>
</dbReference>
<dbReference type="Gene3D" id="3.40.50.300">
    <property type="entry name" value="P-loop containing nucleotide triphosphate hydrolases"/>
    <property type="match status" value="1"/>
</dbReference>
<dbReference type="InterPro" id="IPR027417">
    <property type="entry name" value="P-loop_NTPase"/>
</dbReference>
<dbReference type="InterPro" id="IPR051539">
    <property type="entry name" value="T4SS-coupling_protein"/>
</dbReference>
<dbReference type="InterPro" id="IPR014135">
    <property type="entry name" value="Ti-typ_conjug_TS_TraG-like"/>
</dbReference>
<dbReference type="InterPro" id="IPR003688">
    <property type="entry name" value="TraG/VirD4"/>
</dbReference>
<dbReference type="NCBIfam" id="NF010394">
    <property type="entry name" value="PRK13822.1"/>
    <property type="match status" value="1"/>
</dbReference>
<dbReference type="NCBIfam" id="TIGR02767">
    <property type="entry name" value="TraG-Ti"/>
    <property type="match status" value="1"/>
</dbReference>
<dbReference type="PANTHER" id="PTHR37937">
    <property type="entry name" value="CONJUGATIVE TRANSFER: DNA TRANSPORT"/>
    <property type="match status" value="1"/>
</dbReference>
<dbReference type="PANTHER" id="PTHR37937:SF1">
    <property type="entry name" value="CONJUGATIVE TRANSFER: DNA TRANSPORT"/>
    <property type="match status" value="1"/>
</dbReference>
<dbReference type="Pfam" id="PF02534">
    <property type="entry name" value="T4SS-DNA_transf"/>
    <property type="match status" value="1"/>
</dbReference>
<dbReference type="SUPFAM" id="SSF52540">
    <property type="entry name" value="P-loop containing nucleoside triphosphate hydrolases"/>
    <property type="match status" value="1"/>
</dbReference>
<proteinExistence type="inferred from homology"/>